<name>DNAE2_PSEF5</name>
<dbReference type="EC" id="2.7.7.7" evidence="1"/>
<dbReference type="EMBL" id="CP000076">
    <property type="protein sequence ID" value="AAY92963.1"/>
    <property type="molecule type" value="Genomic_DNA"/>
</dbReference>
<dbReference type="RefSeq" id="WP_011061972.1">
    <property type="nucleotide sequence ID" value="NC_004129.6"/>
</dbReference>
<dbReference type="SMR" id="Q4KAD4"/>
<dbReference type="STRING" id="220664.PFL_3697"/>
<dbReference type="KEGG" id="pfl:PFL_3697"/>
<dbReference type="PATRIC" id="fig|220664.5.peg.3788"/>
<dbReference type="eggNOG" id="COG0587">
    <property type="taxonomic scope" value="Bacteria"/>
</dbReference>
<dbReference type="HOGENOM" id="CLU_001600_4_0_6"/>
<dbReference type="Proteomes" id="UP000008540">
    <property type="component" value="Chromosome"/>
</dbReference>
<dbReference type="GO" id="GO:0005737">
    <property type="term" value="C:cytoplasm"/>
    <property type="evidence" value="ECO:0007669"/>
    <property type="project" value="UniProtKB-SubCell"/>
</dbReference>
<dbReference type="GO" id="GO:0008408">
    <property type="term" value="F:3'-5' exonuclease activity"/>
    <property type="evidence" value="ECO:0007669"/>
    <property type="project" value="InterPro"/>
</dbReference>
<dbReference type="GO" id="GO:0003887">
    <property type="term" value="F:DNA-directed DNA polymerase activity"/>
    <property type="evidence" value="ECO:0007669"/>
    <property type="project" value="UniProtKB-UniRule"/>
</dbReference>
<dbReference type="GO" id="GO:0003676">
    <property type="term" value="F:nucleic acid binding"/>
    <property type="evidence" value="ECO:0007669"/>
    <property type="project" value="InterPro"/>
</dbReference>
<dbReference type="GO" id="GO:0006281">
    <property type="term" value="P:DNA repair"/>
    <property type="evidence" value="ECO:0007669"/>
    <property type="project" value="UniProtKB-UniRule"/>
</dbReference>
<dbReference type="GO" id="GO:0006260">
    <property type="term" value="P:DNA replication"/>
    <property type="evidence" value="ECO:0007669"/>
    <property type="project" value="UniProtKB-KW"/>
</dbReference>
<dbReference type="CDD" id="cd04485">
    <property type="entry name" value="DnaE_OBF"/>
    <property type="match status" value="1"/>
</dbReference>
<dbReference type="CDD" id="cd07434">
    <property type="entry name" value="PHP_PolIIIA_DnaE2"/>
    <property type="match status" value="1"/>
</dbReference>
<dbReference type="Gene3D" id="1.10.150.870">
    <property type="match status" value="1"/>
</dbReference>
<dbReference type="Gene3D" id="3.20.20.140">
    <property type="entry name" value="Metal-dependent hydrolases"/>
    <property type="match status" value="1"/>
</dbReference>
<dbReference type="HAMAP" id="MF_01902">
    <property type="entry name" value="DNApol_error_prone"/>
    <property type="match status" value="1"/>
</dbReference>
<dbReference type="InterPro" id="IPR011708">
    <property type="entry name" value="DNA_pol3_alpha_NTPase_dom"/>
</dbReference>
<dbReference type="InterPro" id="IPR040982">
    <property type="entry name" value="DNA_pol3_finger"/>
</dbReference>
<dbReference type="InterPro" id="IPR023073">
    <property type="entry name" value="DnaE2"/>
</dbReference>
<dbReference type="InterPro" id="IPR004805">
    <property type="entry name" value="DnaE2/DnaE/PolC"/>
</dbReference>
<dbReference type="InterPro" id="IPR029460">
    <property type="entry name" value="DNAPol_HHH"/>
</dbReference>
<dbReference type="InterPro" id="IPR004365">
    <property type="entry name" value="NA-bd_OB_tRNA"/>
</dbReference>
<dbReference type="InterPro" id="IPR004013">
    <property type="entry name" value="PHP_dom"/>
</dbReference>
<dbReference type="InterPro" id="IPR003141">
    <property type="entry name" value="Pol/His_phosphatase_N"/>
</dbReference>
<dbReference type="InterPro" id="IPR016195">
    <property type="entry name" value="Pol/histidinol_Pase-like"/>
</dbReference>
<dbReference type="NCBIfam" id="TIGR00594">
    <property type="entry name" value="polc"/>
    <property type="match status" value="1"/>
</dbReference>
<dbReference type="NCBIfam" id="NF004225">
    <property type="entry name" value="PRK05672.1"/>
    <property type="match status" value="1"/>
</dbReference>
<dbReference type="PANTHER" id="PTHR32294">
    <property type="entry name" value="DNA POLYMERASE III SUBUNIT ALPHA"/>
    <property type="match status" value="1"/>
</dbReference>
<dbReference type="PANTHER" id="PTHR32294:SF4">
    <property type="entry name" value="ERROR-PRONE DNA POLYMERASE"/>
    <property type="match status" value="1"/>
</dbReference>
<dbReference type="Pfam" id="PF07733">
    <property type="entry name" value="DNA_pol3_alpha"/>
    <property type="match status" value="1"/>
</dbReference>
<dbReference type="Pfam" id="PF17657">
    <property type="entry name" value="DNA_pol3_finger"/>
    <property type="match status" value="1"/>
</dbReference>
<dbReference type="Pfam" id="PF14579">
    <property type="entry name" value="HHH_6"/>
    <property type="match status" value="1"/>
</dbReference>
<dbReference type="Pfam" id="PF02811">
    <property type="entry name" value="PHP"/>
    <property type="match status" value="1"/>
</dbReference>
<dbReference type="Pfam" id="PF01336">
    <property type="entry name" value="tRNA_anti-codon"/>
    <property type="match status" value="1"/>
</dbReference>
<dbReference type="SMART" id="SM00481">
    <property type="entry name" value="POLIIIAc"/>
    <property type="match status" value="1"/>
</dbReference>
<dbReference type="SUPFAM" id="SSF89550">
    <property type="entry name" value="PHP domain-like"/>
    <property type="match status" value="1"/>
</dbReference>
<keyword id="KW-0963">Cytoplasm</keyword>
<keyword id="KW-0227">DNA damage</keyword>
<keyword id="KW-0234">DNA repair</keyword>
<keyword id="KW-0235">DNA replication</keyword>
<keyword id="KW-0239">DNA-directed DNA polymerase</keyword>
<keyword id="KW-0548">Nucleotidyltransferase</keyword>
<keyword id="KW-0808">Transferase</keyword>
<accession>Q4KAD4</accession>
<feature type="chain" id="PRO_0000103389" description="Error-prone DNA polymerase">
    <location>
        <begin position="1"/>
        <end position="1034"/>
    </location>
</feature>
<comment type="function">
    <text evidence="1">DNA polymerase involved in damage-induced mutagenesis and translesion synthesis (TLS). It is not the major replicative DNA polymerase.</text>
</comment>
<comment type="catalytic activity">
    <reaction evidence="1">
        <text>DNA(n) + a 2'-deoxyribonucleoside 5'-triphosphate = DNA(n+1) + diphosphate</text>
        <dbReference type="Rhea" id="RHEA:22508"/>
        <dbReference type="Rhea" id="RHEA-COMP:17339"/>
        <dbReference type="Rhea" id="RHEA-COMP:17340"/>
        <dbReference type="ChEBI" id="CHEBI:33019"/>
        <dbReference type="ChEBI" id="CHEBI:61560"/>
        <dbReference type="ChEBI" id="CHEBI:173112"/>
        <dbReference type="EC" id="2.7.7.7"/>
    </reaction>
</comment>
<comment type="subcellular location">
    <subcellularLocation>
        <location evidence="1">Cytoplasm</location>
    </subcellularLocation>
</comment>
<comment type="similarity">
    <text evidence="1">Belongs to the DNA polymerase type-C family. DnaE2 subfamily.</text>
</comment>
<reference key="1">
    <citation type="journal article" date="2005" name="Nat. Biotechnol.">
        <title>Complete genome sequence of the plant commensal Pseudomonas fluorescens Pf-5.</title>
        <authorList>
            <person name="Paulsen I.T."/>
            <person name="Press C.M."/>
            <person name="Ravel J."/>
            <person name="Kobayashi D.Y."/>
            <person name="Myers G.S.A."/>
            <person name="Mavrodi D.V."/>
            <person name="DeBoy R.T."/>
            <person name="Seshadri R."/>
            <person name="Ren Q."/>
            <person name="Madupu R."/>
            <person name="Dodson R.J."/>
            <person name="Durkin A.S."/>
            <person name="Brinkac L.M."/>
            <person name="Daugherty S.C."/>
            <person name="Sullivan S.A."/>
            <person name="Rosovitz M.J."/>
            <person name="Gwinn M.L."/>
            <person name="Zhou L."/>
            <person name="Schneider D.J."/>
            <person name="Cartinhour S.W."/>
            <person name="Nelson W.C."/>
            <person name="Weidman J."/>
            <person name="Watkins K."/>
            <person name="Tran K."/>
            <person name="Khouri H."/>
            <person name="Pierson E.A."/>
            <person name="Pierson L.S. III"/>
            <person name="Thomashow L.S."/>
            <person name="Loper J.E."/>
        </authorList>
    </citation>
    <scope>NUCLEOTIDE SEQUENCE [LARGE SCALE GENOMIC DNA]</scope>
    <source>
        <strain>ATCC BAA-477 / NRRL B-23932 / Pf-5</strain>
    </source>
</reference>
<organism>
    <name type="scientific">Pseudomonas fluorescens (strain ATCC BAA-477 / NRRL B-23932 / Pf-5)</name>
    <dbReference type="NCBI Taxonomy" id="220664"/>
    <lineage>
        <taxon>Bacteria</taxon>
        <taxon>Pseudomonadati</taxon>
        <taxon>Pseudomonadota</taxon>
        <taxon>Gammaproteobacteria</taxon>
        <taxon>Pseudomonadales</taxon>
        <taxon>Pseudomonadaceae</taxon>
        <taxon>Pseudomonas</taxon>
    </lineage>
</organism>
<gene>
    <name evidence="1" type="primary">dnaE2</name>
    <name type="ordered locus">PFL_3697</name>
</gene>
<sequence>MSAYAELHCLSNFSFQRGASSAAELFQRAKALGYQALAITDECTLAGIVRAWQASRDTGLKLIVGSEMQVEDGPRLVLLVEDLAGYQGLCRLITRARRRAEKGSYRLLREDFAEPLPGLLALWLTGAGEPLAQGRWLQQVFPQRLWLALELHCGQDDARHLQQQLALARQLGLPAVACGDVHMHVRGRRALQDTMTAIRHHLPVAEAGQRLFANGERHLRPVEVLQGLYPQALLDESLAIAGRCAFDLGQLRYQYPRELVPEGHDAGSWLRVLTQRGIVRRWPTGARAEVLKQIDKELTLICDLGYESYFLTVHDIVDFARRQHILCQGRGSAANSVVCFALGITEIDPDRSTLLFERFLSRERNEPPDIDVDFEHERREEVLQYLFQRYGRHRAALTAVVSTYHGAGAVRDVAKALGLPPDQVNALADCCGHWSDTPPSVERLQEAGFDPQSPVLRRVLSLTGQLIGFPRHLSQHPGGFVISEQPLDHLVPVENATMAERTVIQWDKDDLDMVGLLKVDILALGMLSAIRRCFDLIHGYRGQRYSLASIPPEDPATYEMIGRADTIGVFQIESRAQMSMLPRLKPQNFYDLVIEVAIVRPGPIQGGMVHPYLRRRNRQEPETYPSPELEGVLKRTLGVPLFQEQVMQIAIVAADYTPGEADQLRRSMAAWKRHGGLEPHRERLRRGMNRNGYSDEFATQIFEQIKGFGSYGFPESHAASFALLTYASCWLKCHEPAAFACALINSWPMGFYSPDQILQDARRHGLQVLAVDVGASDWDCSLEPIPVQPARAGNGPPGQPALRLGLRMIKGFREDDARRIERARRQRAFVDIADLGERARLDVRAQELLADAGALQALAGDRYRARWEVAGVERQLGLFAGLPSQEEAPVALPRPSVGEDLQADYHSLGTTLGPHPLALLRPQLAARRCRSSRDLLAVEHGRSVSVAGLVTGRQRPGTASGVTFVTLEDEFGNVNVVVWRDLAERQRRVLVGAQLLKVDGTLETEGEVRHLIAGRLSDLSPLLDGIHVRSRDFR</sequence>
<protein>
    <recommendedName>
        <fullName evidence="1">Error-prone DNA polymerase</fullName>
        <ecNumber evidence="1">2.7.7.7</ecNumber>
    </recommendedName>
</protein>
<proteinExistence type="inferred from homology"/>
<evidence type="ECO:0000255" key="1">
    <source>
        <dbReference type="HAMAP-Rule" id="MF_01902"/>
    </source>
</evidence>